<feature type="chain" id="PRO_1000048695" description="Chromosomal replication initiator protein DnaA">
    <location>
        <begin position="1"/>
        <end position="505"/>
    </location>
</feature>
<feature type="region of interest" description="Domain I, interacts with DnaA modulators" evidence="1">
    <location>
        <begin position="1"/>
        <end position="90"/>
    </location>
</feature>
<feature type="region of interest" description="Domain II" evidence="1">
    <location>
        <begin position="91"/>
        <end position="168"/>
    </location>
</feature>
<feature type="region of interest" description="Domain III, AAA+ region" evidence="1">
    <location>
        <begin position="169"/>
        <end position="385"/>
    </location>
</feature>
<feature type="region of interest" description="Domain IV, binds dsDNA" evidence="1">
    <location>
        <begin position="386"/>
        <end position="505"/>
    </location>
</feature>
<feature type="binding site" evidence="1">
    <location>
        <position position="213"/>
    </location>
    <ligand>
        <name>ATP</name>
        <dbReference type="ChEBI" id="CHEBI:30616"/>
    </ligand>
</feature>
<feature type="binding site" evidence="1">
    <location>
        <position position="215"/>
    </location>
    <ligand>
        <name>ATP</name>
        <dbReference type="ChEBI" id="CHEBI:30616"/>
    </ligand>
</feature>
<feature type="binding site" evidence="1">
    <location>
        <position position="216"/>
    </location>
    <ligand>
        <name>ATP</name>
        <dbReference type="ChEBI" id="CHEBI:30616"/>
    </ligand>
</feature>
<feature type="binding site" evidence="1">
    <location>
        <position position="217"/>
    </location>
    <ligand>
        <name>ATP</name>
        <dbReference type="ChEBI" id="CHEBI:30616"/>
    </ligand>
</feature>
<name>DNAA_PSEP1</name>
<comment type="function">
    <text evidence="1">Plays an essential role in the initiation and regulation of chromosomal replication. ATP-DnaA binds to the origin of replication (oriC) to initiate formation of the DNA replication initiation complex once per cell cycle. Binds the DnaA box (a 9 base pair repeat at the origin) and separates the double-stranded (ds)DNA. Forms a right-handed helical filament on oriC DNA; dsDNA binds to the exterior of the filament while single-stranded (ss)DNA is stabiized in the filament's interior. The ATP-DnaA-oriC complex binds and stabilizes one strand of the AT-rich DNA unwinding element (DUE), permitting loading of DNA polymerase. After initiation quickly degrades to an ADP-DnaA complex that is not apt for DNA replication. Binds acidic phospholipids.</text>
</comment>
<comment type="subunit">
    <text evidence="1">Oligomerizes as a right-handed, spiral filament on DNA at oriC.</text>
</comment>
<comment type="subcellular location">
    <subcellularLocation>
        <location evidence="1">Cytoplasm</location>
    </subcellularLocation>
</comment>
<comment type="domain">
    <text evidence="1">Domain I is involved in oligomerization and binding regulators, domain II is flexibile and of varying length in different bacteria, domain III forms the AAA+ region, while domain IV binds dsDNA.</text>
</comment>
<comment type="similarity">
    <text evidence="1">Belongs to the DnaA family.</text>
</comment>
<accession>A5VWB8</accession>
<dbReference type="EMBL" id="CP000712">
    <property type="protein sequence ID" value="ABQ76178.1"/>
    <property type="molecule type" value="Genomic_DNA"/>
</dbReference>
<dbReference type="SMR" id="A5VWB8"/>
<dbReference type="KEGG" id="ppf:Pput_0001"/>
<dbReference type="eggNOG" id="COG0593">
    <property type="taxonomic scope" value="Bacteria"/>
</dbReference>
<dbReference type="HOGENOM" id="CLU_026910_0_1_6"/>
<dbReference type="GO" id="GO:0005737">
    <property type="term" value="C:cytoplasm"/>
    <property type="evidence" value="ECO:0007669"/>
    <property type="project" value="UniProtKB-SubCell"/>
</dbReference>
<dbReference type="GO" id="GO:0005886">
    <property type="term" value="C:plasma membrane"/>
    <property type="evidence" value="ECO:0007669"/>
    <property type="project" value="TreeGrafter"/>
</dbReference>
<dbReference type="GO" id="GO:0005524">
    <property type="term" value="F:ATP binding"/>
    <property type="evidence" value="ECO:0007669"/>
    <property type="project" value="UniProtKB-UniRule"/>
</dbReference>
<dbReference type="GO" id="GO:0016887">
    <property type="term" value="F:ATP hydrolysis activity"/>
    <property type="evidence" value="ECO:0007669"/>
    <property type="project" value="InterPro"/>
</dbReference>
<dbReference type="GO" id="GO:0003688">
    <property type="term" value="F:DNA replication origin binding"/>
    <property type="evidence" value="ECO:0007669"/>
    <property type="project" value="UniProtKB-UniRule"/>
</dbReference>
<dbReference type="GO" id="GO:0008289">
    <property type="term" value="F:lipid binding"/>
    <property type="evidence" value="ECO:0007669"/>
    <property type="project" value="UniProtKB-KW"/>
</dbReference>
<dbReference type="GO" id="GO:0006270">
    <property type="term" value="P:DNA replication initiation"/>
    <property type="evidence" value="ECO:0007669"/>
    <property type="project" value="UniProtKB-UniRule"/>
</dbReference>
<dbReference type="GO" id="GO:0006275">
    <property type="term" value="P:regulation of DNA replication"/>
    <property type="evidence" value="ECO:0007669"/>
    <property type="project" value="UniProtKB-UniRule"/>
</dbReference>
<dbReference type="CDD" id="cd00009">
    <property type="entry name" value="AAA"/>
    <property type="match status" value="1"/>
</dbReference>
<dbReference type="CDD" id="cd06571">
    <property type="entry name" value="Bac_DnaA_C"/>
    <property type="match status" value="1"/>
</dbReference>
<dbReference type="FunFam" id="1.10.1750.10:FF:000001">
    <property type="entry name" value="Chromosomal replication initiator protein DnaA"/>
    <property type="match status" value="1"/>
</dbReference>
<dbReference type="FunFam" id="1.10.8.60:FF:000003">
    <property type="entry name" value="Chromosomal replication initiator protein DnaA"/>
    <property type="match status" value="1"/>
</dbReference>
<dbReference type="FunFam" id="3.40.50.300:FF:000103">
    <property type="entry name" value="Chromosomal replication initiator protein DnaA"/>
    <property type="match status" value="1"/>
</dbReference>
<dbReference type="Gene3D" id="1.10.1750.10">
    <property type="match status" value="1"/>
</dbReference>
<dbReference type="Gene3D" id="1.10.8.60">
    <property type="match status" value="1"/>
</dbReference>
<dbReference type="Gene3D" id="3.30.300.180">
    <property type="match status" value="1"/>
</dbReference>
<dbReference type="Gene3D" id="3.40.50.300">
    <property type="entry name" value="P-loop containing nucleotide triphosphate hydrolases"/>
    <property type="match status" value="1"/>
</dbReference>
<dbReference type="HAMAP" id="MF_00377">
    <property type="entry name" value="DnaA_bact"/>
    <property type="match status" value="1"/>
</dbReference>
<dbReference type="InterPro" id="IPR003593">
    <property type="entry name" value="AAA+_ATPase"/>
</dbReference>
<dbReference type="InterPro" id="IPR001957">
    <property type="entry name" value="Chromosome_initiator_DnaA"/>
</dbReference>
<dbReference type="InterPro" id="IPR020591">
    <property type="entry name" value="Chromosome_initiator_DnaA-like"/>
</dbReference>
<dbReference type="InterPro" id="IPR018312">
    <property type="entry name" value="Chromosome_initiator_DnaA_CS"/>
</dbReference>
<dbReference type="InterPro" id="IPR013159">
    <property type="entry name" value="DnaA_C"/>
</dbReference>
<dbReference type="InterPro" id="IPR013317">
    <property type="entry name" value="DnaA_dom"/>
</dbReference>
<dbReference type="InterPro" id="IPR024633">
    <property type="entry name" value="DnaA_N_dom"/>
</dbReference>
<dbReference type="InterPro" id="IPR038454">
    <property type="entry name" value="DnaA_N_sf"/>
</dbReference>
<dbReference type="InterPro" id="IPR027417">
    <property type="entry name" value="P-loop_NTPase"/>
</dbReference>
<dbReference type="InterPro" id="IPR010921">
    <property type="entry name" value="Trp_repressor/repl_initiator"/>
</dbReference>
<dbReference type="NCBIfam" id="TIGR00362">
    <property type="entry name" value="DnaA"/>
    <property type="match status" value="1"/>
</dbReference>
<dbReference type="PANTHER" id="PTHR30050">
    <property type="entry name" value="CHROMOSOMAL REPLICATION INITIATOR PROTEIN DNAA"/>
    <property type="match status" value="1"/>
</dbReference>
<dbReference type="PANTHER" id="PTHR30050:SF2">
    <property type="entry name" value="CHROMOSOMAL REPLICATION INITIATOR PROTEIN DNAA"/>
    <property type="match status" value="1"/>
</dbReference>
<dbReference type="Pfam" id="PF00308">
    <property type="entry name" value="Bac_DnaA"/>
    <property type="match status" value="1"/>
</dbReference>
<dbReference type="Pfam" id="PF08299">
    <property type="entry name" value="Bac_DnaA_C"/>
    <property type="match status" value="1"/>
</dbReference>
<dbReference type="Pfam" id="PF11638">
    <property type="entry name" value="DnaA_N"/>
    <property type="match status" value="1"/>
</dbReference>
<dbReference type="PRINTS" id="PR00051">
    <property type="entry name" value="DNAA"/>
</dbReference>
<dbReference type="SMART" id="SM00382">
    <property type="entry name" value="AAA"/>
    <property type="match status" value="1"/>
</dbReference>
<dbReference type="SMART" id="SM00760">
    <property type="entry name" value="Bac_DnaA_C"/>
    <property type="match status" value="1"/>
</dbReference>
<dbReference type="SUPFAM" id="SSF52540">
    <property type="entry name" value="P-loop containing nucleoside triphosphate hydrolases"/>
    <property type="match status" value="1"/>
</dbReference>
<dbReference type="SUPFAM" id="SSF48295">
    <property type="entry name" value="TrpR-like"/>
    <property type="match status" value="1"/>
</dbReference>
<dbReference type="PROSITE" id="PS01008">
    <property type="entry name" value="DNAA"/>
    <property type="match status" value="1"/>
</dbReference>
<gene>
    <name evidence="1" type="primary">dnaA</name>
    <name type="ordered locus">Pput_0001</name>
</gene>
<keyword id="KW-0067">ATP-binding</keyword>
<keyword id="KW-0963">Cytoplasm</keyword>
<keyword id="KW-0235">DNA replication</keyword>
<keyword id="KW-0238">DNA-binding</keyword>
<keyword id="KW-0446">Lipid-binding</keyword>
<keyword id="KW-0547">Nucleotide-binding</keyword>
<sequence>MSVELWQQCVELLRDELPAQQFNTWIRPLQVEAEGDELRVYAPNRFVLDWVNEKYLGRLLELLGENGSGIAPALSLLIGSRRSSAPRAAPNAPVSAAVAASLAQTQAHKTAPAAAVEPVAVAAAEPVLVETSSRDSFDAMAEPAAAPPSGGRAEQRTVQVEGALKHTSYLNRTFTFDTFVEGKSNQLARAAAWQVADNPKHGYNPLFLYGGVGLGKTHLMHAVGNHLLKKNPNAKVVYLHSERFVADMVKALQLNAINEFKRFYRSVDALLIDDIQFFARKERSQEEFFHTFNALLEGGQQVILTSDRYPKEIEGLEERLKSRFGWGLTVAVEPPELETRVAILMKKADQAKVELPHDAAFFIAQRIRSNVRELEGALKRVIAHSHFMGRDITIELIRESLKDLLALQDKLVSVDNIQRTVAEYYKIKISDLLSKRRSRSVARPRQVAMALSKELTNHSLPEIGDMFGGRDHTTVLHACRKINELKESDADIREDYKNLLRTLTT</sequence>
<reference key="1">
    <citation type="submission" date="2007-05" db="EMBL/GenBank/DDBJ databases">
        <title>Complete sequence of Pseudomonas putida F1.</title>
        <authorList>
            <consortium name="US DOE Joint Genome Institute"/>
            <person name="Copeland A."/>
            <person name="Lucas S."/>
            <person name="Lapidus A."/>
            <person name="Barry K."/>
            <person name="Detter J.C."/>
            <person name="Glavina del Rio T."/>
            <person name="Hammon N."/>
            <person name="Israni S."/>
            <person name="Dalin E."/>
            <person name="Tice H."/>
            <person name="Pitluck S."/>
            <person name="Chain P."/>
            <person name="Malfatti S."/>
            <person name="Shin M."/>
            <person name="Vergez L."/>
            <person name="Schmutz J."/>
            <person name="Larimer F."/>
            <person name="Land M."/>
            <person name="Hauser L."/>
            <person name="Kyrpides N."/>
            <person name="Lykidis A."/>
            <person name="Parales R."/>
            <person name="Richardson P."/>
        </authorList>
    </citation>
    <scope>NUCLEOTIDE SEQUENCE [LARGE SCALE GENOMIC DNA]</scope>
    <source>
        <strain>ATCC 700007 / DSM 6899 / JCM 31910 / BCRC 17059 / LMG 24140 / F1</strain>
    </source>
</reference>
<organism>
    <name type="scientific">Pseudomonas putida (strain ATCC 700007 / DSM 6899 / JCM 31910 / BCRC 17059 / LMG 24140 / F1)</name>
    <dbReference type="NCBI Taxonomy" id="351746"/>
    <lineage>
        <taxon>Bacteria</taxon>
        <taxon>Pseudomonadati</taxon>
        <taxon>Pseudomonadota</taxon>
        <taxon>Gammaproteobacteria</taxon>
        <taxon>Pseudomonadales</taxon>
        <taxon>Pseudomonadaceae</taxon>
        <taxon>Pseudomonas</taxon>
    </lineage>
</organism>
<proteinExistence type="inferred from homology"/>
<evidence type="ECO:0000255" key="1">
    <source>
        <dbReference type="HAMAP-Rule" id="MF_00377"/>
    </source>
</evidence>
<protein>
    <recommendedName>
        <fullName evidence="1">Chromosomal replication initiator protein DnaA</fullName>
    </recommendedName>
</protein>